<gene>
    <name evidence="1" type="primary">pyrD</name>
    <name type="ordered locus">EcHS_A1054</name>
</gene>
<protein>
    <recommendedName>
        <fullName evidence="1">Dihydroorotate dehydrogenase (quinone)</fullName>
        <ecNumber evidence="1">1.3.5.2</ecNumber>
    </recommendedName>
    <alternativeName>
        <fullName evidence="1">DHOdehase</fullName>
        <shortName evidence="1">DHOD</shortName>
        <shortName evidence="1">DHODase</shortName>
    </alternativeName>
    <alternativeName>
        <fullName evidence="1">Dihydroorotate oxidase</fullName>
    </alternativeName>
</protein>
<dbReference type="EC" id="1.3.5.2" evidence="1"/>
<dbReference type="EMBL" id="CP000802">
    <property type="protein sequence ID" value="ABV05401.1"/>
    <property type="molecule type" value="Genomic_DNA"/>
</dbReference>
<dbReference type="RefSeq" id="WP_001295352.1">
    <property type="nucleotide sequence ID" value="NC_009800.1"/>
</dbReference>
<dbReference type="SMR" id="A7ZYP7"/>
<dbReference type="GeneID" id="93776469"/>
<dbReference type="KEGG" id="ecx:EcHS_A1054"/>
<dbReference type="HOGENOM" id="CLU_013640_2_0_6"/>
<dbReference type="UniPathway" id="UPA00070">
    <property type="reaction ID" value="UER00946"/>
</dbReference>
<dbReference type="GO" id="GO:0005737">
    <property type="term" value="C:cytoplasm"/>
    <property type="evidence" value="ECO:0007669"/>
    <property type="project" value="InterPro"/>
</dbReference>
<dbReference type="GO" id="GO:0005886">
    <property type="term" value="C:plasma membrane"/>
    <property type="evidence" value="ECO:0007669"/>
    <property type="project" value="UniProtKB-SubCell"/>
</dbReference>
<dbReference type="GO" id="GO:0106430">
    <property type="term" value="F:dihydroorotate dehydrogenase (quinone) activity"/>
    <property type="evidence" value="ECO:0007669"/>
    <property type="project" value="UniProtKB-EC"/>
</dbReference>
<dbReference type="GO" id="GO:0006207">
    <property type="term" value="P:'de novo' pyrimidine nucleobase biosynthetic process"/>
    <property type="evidence" value="ECO:0007669"/>
    <property type="project" value="InterPro"/>
</dbReference>
<dbReference type="GO" id="GO:0044205">
    <property type="term" value="P:'de novo' UMP biosynthetic process"/>
    <property type="evidence" value="ECO:0007669"/>
    <property type="project" value="UniProtKB-UniRule"/>
</dbReference>
<dbReference type="CDD" id="cd04738">
    <property type="entry name" value="DHOD_2_like"/>
    <property type="match status" value="1"/>
</dbReference>
<dbReference type="FunFam" id="3.20.20.70:FF:000028">
    <property type="entry name" value="Dihydroorotate dehydrogenase (quinone)"/>
    <property type="match status" value="1"/>
</dbReference>
<dbReference type="Gene3D" id="3.20.20.70">
    <property type="entry name" value="Aldolase class I"/>
    <property type="match status" value="1"/>
</dbReference>
<dbReference type="HAMAP" id="MF_00225">
    <property type="entry name" value="DHO_dh_type2"/>
    <property type="match status" value="1"/>
</dbReference>
<dbReference type="InterPro" id="IPR013785">
    <property type="entry name" value="Aldolase_TIM"/>
</dbReference>
<dbReference type="InterPro" id="IPR050074">
    <property type="entry name" value="DHO_dehydrogenase"/>
</dbReference>
<dbReference type="InterPro" id="IPR012135">
    <property type="entry name" value="Dihydroorotate_DH_1_2"/>
</dbReference>
<dbReference type="InterPro" id="IPR005719">
    <property type="entry name" value="Dihydroorotate_DH_2"/>
</dbReference>
<dbReference type="InterPro" id="IPR005720">
    <property type="entry name" value="Dihydroorotate_DH_cat"/>
</dbReference>
<dbReference type="InterPro" id="IPR001295">
    <property type="entry name" value="Dihydroorotate_DH_CS"/>
</dbReference>
<dbReference type="NCBIfam" id="NF003644">
    <property type="entry name" value="PRK05286.1-1"/>
    <property type="match status" value="1"/>
</dbReference>
<dbReference type="NCBIfam" id="NF003645">
    <property type="entry name" value="PRK05286.1-2"/>
    <property type="match status" value="1"/>
</dbReference>
<dbReference type="NCBIfam" id="NF003646">
    <property type="entry name" value="PRK05286.1-4"/>
    <property type="match status" value="1"/>
</dbReference>
<dbReference type="NCBIfam" id="NF003652">
    <property type="entry name" value="PRK05286.2-5"/>
    <property type="match status" value="1"/>
</dbReference>
<dbReference type="NCBIfam" id="TIGR01036">
    <property type="entry name" value="pyrD_sub2"/>
    <property type="match status" value="1"/>
</dbReference>
<dbReference type="PANTHER" id="PTHR48109:SF4">
    <property type="entry name" value="DIHYDROOROTATE DEHYDROGENASE (QUINONE), MITOCHONDRIAL"/>
    <property type="match status" value="1"/>
</dbReference>
<dbReference type="PANTHER" id="PTHR48109">
    <property type="entry name" value="DIHYDROOROTATE DEHYDROGENASE (QUINONE), MITOCHONDRIAL-RELATED"/>
    <property type="match status" value="1"/>
</dbReference>
<dbReference type="Pfam" id="PF01180">
    <property type="entry name" value="DHO_dh"/>
    <property type="match status" value="1"/>
</dbReference>
<dbReference type="PIRSF" id="PIRSF000164">
    <property type="entry name" value="DHO_oxidase"/>
    <property type="match status" value="1"/>
</dbReference>
<dbReference type="SUPFAM" id="SSF51395">
    <property type="entry name" value="FMN-linked oxidoreductases"/>
    <property type="match status" value="1"/>
</dbReference>
<dbReference type="PROSITE" id="PS00911">
    <property type="entry name" value="DHODEHASE_1"/>
    <property type="match status" value="1"/>
</dbReference>
<dbReference type="PROSITE" id="PS00912">
    <property type="entry name" value="DHODEHASE_2"/>
    <property type="match status" value="1"/>
</dbReference>
<feature type="chain" id="PRO_1000058682" description="Dihydroorotate dehydrogenase (quinone)">
    <location>
        <begin position="1"/>
        <end position="336"/>
    </location>
</feature>
<feature type="active site" description="Nucleophile" evidence="1">
    <location>
        <position position="175"/>
    </location>
</feature>
<feature type="binding site" evidence="1">
    <location>
        <begin position="62"/>
        <end position="66"/>
    </location>
    <ligand>
        <name>FMN</name>
        <dbReference type="ChEBI" id="CHEBI:58210"/>
    </ligand>
</feature>
<feature type="binding site" evidence="1">
    <location>
        <position position="66"/>
    </location>
    <ligand>
        <name>substrate</name>
    </ligand>
</feature>
<feature type="binding site" evidence="1">
    <location>
        <position position="86"/>
    </location>
    <ligand>
        <name>FMN</name>
        <dbReference type="ChEBI" id="CHEBI:58210"/>
    </ligand>
</feature>
<feature type="binding site" evidence="1">
    <location>
        <begin position="111"/>
        <end position="115"/>
    </location>
    <ligand>
        <name>substrate</name>
    </ligand>
</feature>
<feature type="binding site" evidence="1">
    <location>
        <position position="139"/>
    </location>
    <ligand>
        <name>FMN</name>
        <dbReference type="ChEBI" id="CHEBI:58210"/>
    </ligand>
</feature>
<feature type="binding site" evidence="1">
    <location>
        <position position="172"/>
    </location>
    <ligand>
        <name>FMN</name>
        <dbReference type="ChEBI" id="CHEBI:58210"/>
    </ligand>
</feature>
<feature type="binding site" evidence="1">
    <location>
        <position position="172"/>
    </location>
    <ligand>
        <name>substrate</name>
    </ligand>
</feature>
<feature type="binding site" evidence="1">
    <location>
        <position position="177"/>
    </location>
    <ligand>
        <name>substrate</name>
    </ligand>
</feature>
<feature type="binding site" evidence="1">
    <location>
        <position position="217"/>
    </location>
    <ligand>
        <name>FMN</name>
        <dbReference type="ChEBI" id="CHEBI:58210"/>
    </ligand>
</feature>
<feature type="binding site" evidence="1">
    <location>
        <position position="245"/>
    </location>
    <ligand>
        <name>FMN</name>
        <dbReference type="ChEBI" id="CHEBI:58210"/>
    </ligand>
</feature>
<feature type="binding site" evidence="1">
    <location>
        <begin position="246"/>
        <end position="247"/>
    </location>
    <ligand>
        <name>substrate</name>
    </ligand>
</feature>
<feature type="binding site" evidence="1">
    <location>
        <position position="268"/>
    </location>
    <ligand>
        <name>FMN</name>
        <dbReference type="ChEBI" id="CHEBI:58210"/>
    </ligand>
</feature>
<feature type="binding site" evidence="1">
    <location>
        <position position="297"/>
    </location>
    <ligand>
        <name>FMN</name>
        <dbReference type="ChEBI" id="CHEBI:58210"/>
    </ligand>
</feature>
<feature type="binding site" evidence="1">
    <location>
        <begin position="318"/>
        <end position="319"/>
    </location>
    <ligand>
        <name>FMN</name>
        <dbReference type="ChEBI" id="CHEBI:58210"/>
    </ligand>
</feature>
<keyword id="KW-1003">Cell membrane</keyword>
<keyword id="KW-0285">Flavoprotein</keyword>
<keyword id="KW-0288">FMN</keyword>
<keyword id="KW-0472">Membrane</keyword>
<keyword id="KW-0560">Oxidoreductase</keyword>
<keyword id="KW-0665">Pyrimidine biosynthesis</keyword>
<reference key="1">
    <citation type="journal article" date="2008" name="J. Bacteriol.">
        <title>The pangenome structure of Escherichia coli: comparative genomic analysis of E. coli commensal and pathogenic isolates.</title>
        <authorList>
            <person name="Rasko D.A."/>
            <person name="Rosovitz M.J."/>
            <person name="Myers G.S.A."/>
            <person name="Mongodin E.F."/>
            <person name="Fricke W.F."/>
            <person name="Gajer P."/>
            <person name="Crabtree J."/>
            <person name="Sebaihia M."/>
            <person name="Thomson N.R."/>
            <person name="Chaudhuri R."/>
            <person name="Henderson I.R."/>
            <person name="Sperandio V."/>
            <person name="Ravel J."/>
        </authorList>
    </citation>
    <scope>NUCLEOTIDE SEQUENCE [LARGE SCALE GENOMIC DNA]</scope>
    <source>
        <strain>HS</strain>
    </source>
</reference>
<accession>A7ZYP7</accession>
<organism>
    <name type="scientific">Escherichia coli O9:H4 (strain HS)</name>
    <dbReference type="NCBI Taxonomy" id="331112"/>
    <lineage>
        <taxon>Bacteria</taxon>
        <taxon>Pseudomonadati</taxon>
        <taxon>Pseudomonadota</taxon>
        <taxon>Gammaproteobacteria</taxon>
        <taxon>Enterobacterales</taxon>
        <taxon>Enterobacteriaceae</taxon>
        <taxon>Escherichia</taxon>
    </lineage>
</organism>
<name>PYRD_ECOHS</name>
<comment type="function">
    <text evidence="1">Catalyzes the conversion of dihydroorotate to orotate with quinone as electron acceptor.</text>
</comment>
<comment type="catalytic activity">
    <reaction evidence="1">
        <text>(S)-dihydroorotate + a quinone = orotate + a quinol</text>
        <dbReference type="Rhea" id="RHEA:30187"/>
        <dbReference type="ChEBI" id="CHEBI:24646"/>
        <dbReference type="ChEBI" id="CHEBI:30839"/>
        <dbReference type="ChEBI" id="CHEBI:30864"/>
        <dbReference type="ChEBI" id="CHEBI:132124"/>
        <dbReference type="EC" id="1.3.5.2"/>
    </reaction>
</comment>
<comment type="cofactor">
    <cofactor evidence="1">
        <name>FMN</name>
        <dbReference type="ChEBI" id="CHEBI:58210"/>
    </cofactor>
    <text evidence="1">Binds 1 FMN per subunit.</text>
</comment>
<comment type="pathway">
    <text evidence="1">Pyrimidine metabolism; UMP biosynthesis via de novo pathway; orotate from (S)-dihydroorotate (quinone route): step 1/1.</text>
</comment>
<comment type="subunit">
    <text evidence="1">Monomer.</text>
</comment>
<comment type="subcellular location">
    <subcellularLocation>
        <location evidence="1">Cell membrane</location>
        <topology evidence="1">Peripheral membrane protein</topology>
    </subcellularLocation>
</comment>
<comment type="similarity">
    <text evidence="1">Belongs to the dihydroorotate dehydrogenase family. Type 2 subfamily.</text>
</comment>
<evidence type="ECO:0000255" key="1">
    <source>
        <dbReference type="HAMAP-Rule" id="MF_00225"/>
    </source>
</evidence>
<sequence length="336" mass="36775">MYYPFVRKALFQLDPERAHEFTFQQLRRITGTPFEALVRQKVPAKPVNCMGLTFKNPLGLAAGLDKDGECIDALGAMGFGSIEIGTVTPRPQPGNDKPRLFRLVDAEGLINRMGFNNLGVDNLVENVKKAHYDGVLGINIGKNKDTPVEQGKDDYLICMEKIYAYAGYIAINISSPNTPGLRTLQYGEALDDLLTAIKNKQNDLQAMHHKYVPIAVKIAPDLSEEELIQVADSLVRHNIDGVIATNTTLDRSLVQGMKNCDQTGGLSGRPLQLKSTEIIRRLSLELNGRLPIIGVGGIDSVIAAREKIAAGASLVQIYSGFIFKGPPLIKEIVTHI</sequence>
<proteinExistence type="inferred from homology"/>